<sequence length="369" mass="40338">MTQKTILNDTHRALGAKMVDFGGWDMPIHYGSQLDEHHQVRRDAGMFDVSHMTVVDLHGARVRAFLRDLLANSVDKLKVCGKALYTCMLNPQGGVIDDLIVYYMSEDFFRLVVNAATREKDLQWIGEQAVRFDVRVEERSDFAMIAVQGPNARANVIDLLDPADTAAASKLGRFAALQTRSRDGIELFLARTGYTGEDGFEIVLPQEAAVAFWNALLAQGVKPAGLGARDTLRLEAGMHLYGQDMDDAVTPYEAALAWTIALDEGRDFIGRRVLESQKAQGAPRQLIGVVMDDKGVLRHGQAVFTASGEGEILSGTFSPTLGKAIAFARVPAGSIDQLRVDIRGKQVPLRAVKFPFVRDGQAQPGVLGD</sequence>
<gene>
    <name evidence="1" type="primary">gcvT</name>
    <name type="ordered locus">XOO1697</name>
</gene>
<proteinExistence type="inferred from homology"/>
<accession>Q2P4S5</accession>
<keyword id="KW-0032">Aminotransferase</keyword>
<keyword id="KW-0808">Transferase</keyword>
<name>GCST_XANOM</name>
<comment type="function">
    <text evidence="1">The glycine cleavage system catalyzes the degradation of glycine.</text>
</comment>
<comment type="catalytic activity">
    <reaction evidence="1">
        <text>N(6)-[(R)-S(8)-aminomethyldihydrolipoyl]-L-lysyl-[protein] + (6S)-5,6,7,8-tetrahydrofolate = N(6)-[(R)-dihydrolipoyl]-L-lysyl-[protein] + (6R)-5,10-methylene-5,6,7,8-tetrahydrofolate + NH4(+)</text>
        <dbReference type="Rhea" id="RHEA:16945"/>
        <dbReference type="Rhea" id="RHEA-COMP:10475"/>
        <dbReference type="Rhea" id="RHEA-COMP:10492"/>
        <dbReference type="ChEBI" id="CHEBI:15636"/>
        <dbReference type="ChEBI" id="CHEBI:28938"/>
        <dbReference type="ChEBI" id="CHEBI:57453"/>
        <dbReference type="ChEBI" id="CHEBI:83100"/>
        <dbReference type="ChEBI" id="CHEBI:83143"/>
        <dbReference type="EC" id="2.1.2.10"/>
    </reaction>
</comment>
<comment type="subunit">
    <text evidence="1">The glycine cleavage system is composed of four proteins: P, T, L and H.</text>
</comment>
<comment type="similarity">
    <text evidence="1">Belongs to the GcvT family.</text>
</comment>
<organism>
    <name type="scientific">Xanthomonas oryzae pv. oryzae (strain MAFF 311018)</name>
    <dbReference type="NCBI Taxonomy" id="342109"/>
    <lineage>
        <taxon>Bacteria</taxon>
        <taxon>Pseudomonadati</taxon>
        <taxon>Pseudomonadota</taxon>
        <taxon>Gammaproteobacteria</taxon>
        <taxon>Lysobacterales</taxon>
        <taxon>Lysobacteraceae</taxon>
        <taxon>Xanthomonas</taxon>
    </lineage>
</organism>
<reference key="1">
    <citation type="journal article" date="2005" name="Jpn. Agric. Res. Q.">
        <title>Genome sequence of Xanthomonas oryzae pv. oryzae suggests contribution of large numbers of effector genes and insertion sequences to its race diversity.</title>
        <authorList>
            <person name="Ochiai H."/>
            <person name="Inoue Y."/>
            <person name="Takeya M."/>
            <person name="Sasaki A."/>
            <person name="Kaku H."/>
        </authorList>
    </citation>
    <scope>NUCLEOTIDE SEQUENCE [LARGE SCALE GENOMIC DNA]</scope>
    <source>
        <strain>MAFF 311018</strain>
    </source>
</reference>
<protein>
    <recommendedName>
        <fullName evidence="1">Aminomethyltransferase</fullName>
        <ecNumber evidence="1">2.1.2.10</ecNumber>
    </recommendedName>
    <alternativeName>
        <fullName evidence="1">Glycine cleavage system T protein</fullName>
    </alternativeName>
</protein>
<feature type="chain" id="PRO_1000047728" description="Aminomethyltransferase">
    <location>
        <begin position="1"/>
        <end position="369"/>
    </location>
</feature>
<dbReference type="EC" id="2.1.2.10" evidence="1"/>
<dbReference type="EMBL" id="AP008229">
    <property type="protein sequence ID" value="BAE68452.1"/>
    <property type="molecule type" value="Genomic_DNA"/>
</dbReference>
<dbReference type="RefSeq" id="WP_011258548.1">
    <property type="nucleotide sequence ID" value="NC_007705.1"/>
</dbReference>
<dbReference type="SMR" id="Q2P4S5"/>
<dbReference type="KEGG" id="xom:XOO1697"/>
<dbReference type="HOGENOM" id="CLU_007884_10_2_6"/>
<dbReference type="GO" id="GO:0005829">
    <property type="term" value="C:cytosol"/>
    <property type="evidence" value="ECO:0007669"/>
    <property type="project" value="TreeGrafter"/>
</dbReference>
<dbReference type="GO" id="GO:0005960">
    <property type="term" value="C:glycine cleavage complex"/>
    <property type="evidence" value="ECO:0007669"/>
    <property type="project" value="InterPro"/>
</dbReference>
<dbReference type="GO" id="GO:0004047">
    <property type="term" value="F:aminomethyltransferase activity"/>
    <property type="evidence" value="ECO:0007669"/>
    <property type="project" value="UniProtKB-UniRule"/>
</dbReference>
<dbReference type="GO" id="GO:0008483">
    <property type="term" value="F:transaminase activity"/>
    <property type="evidence" value="ECO:0007669"/>
    <property type="project" value="UniProtKB-KW"/>
</dbReference>
<dbReference type="GO" id="GO:0019464">
    <property type="term" value="P:glycine decarboxylation via glycine cleavage system"/>
    <property type="evidence" value="ECO:0007669"/>
    <property type="project" value="UniProtKB-UniRule"/>
</dbReference>
<dbReference type="FunFam" id="2.40.30.110:FF:000001">
    <property type="entry name" value="Aminomethyltransferase"/>
    <property type="match status" value="1"/>
</dbReference>
<dbReference type="FunFam" id="3.30.70.1400:FF:000001">
    <property type="entry name" value="Aminomethyltransferase"/>
    <property type="match status" value="1"/>
</dbReference>
<dbReference type="FunFam" id="4.10.1250.10:FF:000001">
    <property type="entry name" value="Aminomethyltransferase"/>
    <property type="match status" value="1"/>
</dbReference>
<dbReference type="Gene3D" id="2.40.30.110">
    <property type="entry name" value="Aminomethyltransferase beta-barrel domains"/>
    <property type="match status" value="1"/>
</dbReference>
<dbReference type="Gene3D" id="3.30.70.1400">
    <property type="entry name" value="Aminomethyltransferase beta-barrel domains"/>
    <property type="match status" value="1"/>
</dbReference>
<dbReference type="Gene3D" id="4.10.1250.10">
    <property type="entry name" value="Aminomethyltransferase fragment"/>
    <property type="match status" value="1"/>
</dbReference>
<dbReference type="Gene3D" id="3.30.1360.120">
    <property type="entry name" value="Probable tRNA modification gtpase trme, domain 1"/>
    <property type="match status" value="1"/>
</dbReference>
<dbReference type="HAMAP" id="MF_00259">
    <property type="entry name" value="GcvT"/>
    <property type="match status" value="1"/>
</dbReference>
<dbReference type="InterPro" id="IPR006223">
    <property type="entry name" value="GCS_T"/>
</dbReference>
<dbReference type="InterPro" id="IPR022903">
    <property type="entry name" value="GCS_T_bac"/>
</dbReference>
<dbReference type="InterPro" id="IPR013977">
    <property type="entry name" value="GCST_C"/>
</dbReference>
<dbReference type="InterPro" id="IPR006222">
    <property type="entry name" value="GCV_T_N"/>
</dbReference>
<dbReference type="InterPro" id="IPR028896">
    <property type="entry name" value="GcvT/YgfZ/DmdA"/>
</dbReference>
<dbReference type="InterPro" id="IPR029043">
    <property type="entry name" value="GcvT/YgfZ_C"/>
</dbReference>
<dbReference type="InterPro" id="IPR027266">
    <property type="entry name" value="TrmE/GcvT_dom1"/>
</dbReference>
<dbReference type="NCBIfam" id="TIGR00528">
    <property type="entry name" value="gcvT"/>
    <property type="match status" value="1"/>
</dbReference>
<dbReference type="NCBIfam" id="NF001567">
    <property type="entry name" value="PRK00389.1"/>
    <property type="match status" value="1"/>
</dbReference>
<dbReference type="PANTHER" id="PTHR43757">
    <property type="entry name" value="AMINOMETHYLTRANSFERASE"/>
    <property type="match status" value="1"/>
</dbReference>
<dbReference type="PANTHER" id="PTHR43757:SF2">
    <property type="entry name" value="AMINOMETHYLTRANSFERASE, MITOCHONDRIAL"/>
    <property type="match status" value="1"/>
</dbReference>
<dbReference type="Pfam" id="PF01571">
    <property type="entry name" value="GCV_T"/>
    <property type="match status" value="1"/>
</dbReference>
<dbReference type="Pfam" id="PF08669">
    <property type="entry name" value="GCV_T_C"/>
    <property type="match status" value="1"/>
</dbReference>
<dbReference type="PIRSF" id="PIRSF006487">
    <property type="entry name" value="GcvT"/>
    <property type="match status" value="1"/>
</dbReference>
<dbReference type="SUPFAM" id="SSF101790">
    <property type="entry name" value="Aminomethyltransferase beta-barrel domain"/>
    <property type="match status" value="1"/>
</dbReference>
<dbReference type="SUPFAM" id="SSF103025">
    <property type="entry name" value="Folate-binding domain"/>
    <property type="match status" value="1"/>
</dbReference>
<evidence type="ECO:0000255" key="1">
    <source>
        <dbReference type="HAMAP-Rule" id="MF_00259"/>
    </source>
</evidence>